<dbReference type="EC" id="3.1.1.7"/>
<dbReference type="EMBL" id="U55003">
    <property type="protein sequence ID" value="AAB17025.1"/>
    <property type="molecule type" value="Genomic_DNA"/>
</dbReference>
<dbReference type="SMR" id="Q92081"/>
<dbReference type="MEROPS" id="S09.980"/>
<dbReference type="GlyCosmos" id="Q92081">
    <property type="glycosylation" value="1 site, No reported glycans"/>
</dbReference>
<dbReference type="GO" id="GO:0005615">
    <property type="term" value="C:extracellular space"/>
    <property type="evidence" value="ECO:0007669"/>
    <property type="project" value="TreeGrafter"/>
</dbReference>
<dbReference type="GO" id="GO:0005886">
    <property type="term" value="C:plasma membrane"/>
    <property type="evidence" value="ECO:0007669"/>
    <property type="project" value="UniProtKB-SubCell"/>
</dbReference>
<dbReference type="GO" id="GO:0045202">
    <property type="term" value="C:synapse"/>
    <property type="evidence" value="ECO:0007669"/>
    <property type="project" value="UniProtKB-SubCell"/>
</dbReference>
<dbReference type="GO" id="GO:0003990">
    <property type="term" value="F:acetylcholinesterase activity"/>
    <property type="evidence" value="ECO:0007669"/>
    <property type="project" value="UniProtKB-EC"/>
</dbReference>
<dbReference type="GO" id="GO:0006581">
    <property type="term" value="P:acetylcholine catabolic process"/>
    <property type="evidence" value="ECO:0007669"/>
    <property type="project" value="TreeGrafter"/>
</dbReference>
<dbReference type="GO" id="GO:0019695">
    <property type="term" value="P:choline metabolic process"/>
    <property type="evidence" value="ECO:0007669"/>
    <property type="project" value="TreeGrafter"/>
</dbReference>
<dbReference type="Gene3D" id="3.40.50.1820">
    <property type="entry name" value="alpha/beta hydrolase"/>
    <property type="match status" value="1"/>
</dbReference>
<dbReference type="InterPro" id="IPR029058">
    <property type="entry name" value="AB_hydrolase_fold"/>
</dbReference>
<dbReference type="InterPro" id="IPR050654">
    <property type="entry name" value="AChE-related_enzymes"/>
</dbReference>
<dbReference type="InterPro" id="IPR002018">
    <property type="entry name" value="CarbesteraseB"/>
</dbReference>
<dbReference type="InterPro" id="IPR019826">
    <property type="entry name" value="Carboxylesterase_B_AS"/>
</dbReference>
<dbReference type="InterPro" id="IPR000997">
    <property type="entry name" value="Cholinesterase"/>
</dbReference>
<dbReference type="PANTHER" id="PTHR43918">
    <property type="entry name" value="ACETYLCHOLINESTERASE"/>
    <property type="match status" value="1"/>
</dbReference>
<dbReference type="PANTHER" id="PTHR43918:SF12">
    <property type="entry name" value="ACETYLCHOLINESTERASE 1"/>
    <property type="match status" value="1"/>
</dbReference>
<dbReference type="Pfam" id="PF00135">
    <property type="entry name" value="COesterase"/>
    <property type="match status" value="1"/>
</dbReference>
<dbReference type="PRINTS" id="PR00878">
    <property type="entry name" value="CHOLNESTRASE"/>
</dbReference>
<dbReference type="SUPFAM" id="SSF53474">
    <property type="entry name" value="alpha/beta-Hydrolases"/>
    <property type="match status" value="1"/>
</dbReference>
<dbReference type="PROSITE" id="PS00122">
    <property type="entry name" value="CARBOXYLESTERASE_B_1"/>
    <property type="match status" value="1"/>
</dbReference>
<feature type="chain" id="PRO_0000070279" description="Acetylcholinesterase">
    <location>
        <begin position="1" status="less than"/>
        <end position="338" status="greater than"/>
    </location>
</feature>
<feature type="active site" description="Acyl-ester intermediate" evidence="3">
    <location>
        <position position="99"/>
    </location>
</feature>
<feature type="active site" description="Charge relay system" evidence="1">
    <location>
        <position position="226"/>
    </location>
</feature>
<feature type="glycosylation site" description="N-linked (GlcNAc...) asparagine" evidence="2">
    <location>
        <position position="8"/>
    </location>
</feature>
<feature type="disulfide bond" evidence="1">
    <location>
        <begin position="153"/>
        <end position="164"/>
    </location>
</feature>
<feature type="non-terminal residue">
    <location>
        <position position="1"/>
    </location>
</feature>
<feature type="non-terminal residue">
    <location>
        <position position="338"/>
    </location>
</feature>
<evidence type="ECO:0000250" key="1"/>
<evidence type="ECO:0000255" key="2"/>
<evidence type="ECO:0000255" key="3">
    <source>
        <dbReference type="PROSITE-ProRule" id="PRU10039"/>
    </source>
</evidence>
<evidence type="ECO:0000305" key="4"/>
<reference key="1">
    <citation type="journal article" date="1996" name="Comp. Biochem. Physiol.">
        <title>Biochemical and molecular characterization of acetylcholinesterase from the hagfish Myxine glutinosa.</title>
        <authorList>
            <person name="Sanders M."/>
            <person name="Mathews B."/>
            <person name="Sutherland D."/>
            <person name="Soong W."/>
            <person name="Giles H."/>
            <person name="Pezzementi L."/>
        </authorList>
    </citation>
    <scope>NUCLEOTIDE SEQUENCE [GENOMIC DNA]</scope>
</reference>
<gene>
    <name type="primary">ache</name>
    <name type="synonym">ace1</name>
</gene>
<name>ACES_MYXGL</name>
<keyword id="KW-1003">Cell membrane</keyword>
<keyword id="KW-1015">Disulfide bond</keyword>
<keyword id="KW-0325">Glycoprotein</keyword>
<keyword id="KW-0378">Hydrolase</keyword>
<keyword id="KW-0472">Membrane</keyword>
<keyword id="KW-0531">Neurotransmitter degradation</keyword>
<keyword id="KW-0964">Secreted</keyword>
<keyword id="KW-0719">Serine esterase</keyword>
<keyword id="KW-0770">Synapse</keyword>
<proteinExistence type="inferred from homology"/>
<comment type="function">
    <text>Terminates signal transduction at the neuromuscular junction by rapid hydrolysis of the acetylcholine released into the synaptic cleft.</text>
</comment>
<comment type="catalytic activity">
    <reaction>
        <text>acetylcholine + H2O = choline + acetate + H(+)</text>
        <dbReference type="Rhea" id="RHEA:17561"/>
        <dbReference type="ChEBI" id="CHEBI:15354"/>
        <dbReference type="ChEBI" id="CHEBI:15355"/>
        <dbReference type="ChEBI" id="CHEBI:15377"/>
        <dbReference type="ChEBI" id="CHEBI:15378"/>
        <dbReference type="ChEBI" id="CHEBI:30089"/>
        <dbReference type="EC" id="3.1.1.7"/>
    </reaction>
</comment>
<comment type="subcellular location">
    <subcellularLocation>
        <location>Synapse</location>
    </subcellularLocation>
    <subcellularLocation>
        <location>Secreted</location>
    </subcellularLocation>
    <subcellularLocation>
        <location evidence="1">Cell membrane</location>
        <topology evidence="1">Peripheral membrane protein</topology>
    </subcellularLocation>
</comment>
<comment type="similarity">
    <text evidence="4">Belongs to the type-B carboxylesterase/lipase family.</text>
</comment>
<organism>
    <name type="scientific">Myxine glutinosa</name>
    <name type="common">Atlantic hagfish</name>
    <dbReference type="NCBI Taxonomy" id="7769"/>
    <lineage>
        <taxon>Eukaryota</taxon>
        <taxon>Metazoa</taxon>
        <taxon>Chordata</taxon>
        <taxon>Craniata</taxon>
        <taxon>Vertebrata</taxon>
        <taxon>Cyclostomata</taxon>
        <taxon>Myxini</taxon>
        <taxon>Myxiniformes</taxon>
        <taxon>Myxinidae</taxon>
        <taxon>Myxininae</taxon>
        <taxon>Myxine</taxon>
    </lineage>
</organism>
<accession>Q92081</accession>
<protein>
    <recommendedName>
        <fullName>Acetylcholinesterase</fullName>
        <shortName>AChE</shortName>
        <ecNumber>3.1.1.7</ecNumber>
    </recommendedName>
</protein>
<sequence>VPSPRPQNATVMVWIFGGGFAYGTSSLNVYDGRYLAQAEGAIVVSMNYRVGALGFLSLPGSPVPGNAGLFDQQLALRWVHGNIHRFGGNPQSVTLFGESAGSASVAPHLLSRHSQQFFQRAILQSGTLNAPWATVEDTEARRRAEALAQALGCPTDDDNELLNCLYARPPQEIVSKEGDVVIEPSIFRFPFVPVVDGHFIIDSPIVLLQQGIFKKTDLLLGVNRNEGSFFLIYGAPGFSKDHESLISREDFLENIPMIVPQGNEVSVDAIVLQYTDWLAQNDALKNRDAIEDIVGDYNVICPVVEMATRYAEFGNNVYFYFFNQRASNLPWPQWMGVI</sequence>